<organism>
    <name type="scientific">Thermoanaerobacter pseudethanolicus (strain ATCC 33223 / 39E)</name>
    <name type="common">Clostridium thermohydrosulfuricum</name>
    <dbReference type="NCBI Taxonomy" id="340099"/>
    <lineage>
        <taxon>Bacteria</taxon>
        <taxon>Bacillati</taxon>
        <taxon>Bacillota</taxon>
        <taxon>Clostridia</taxon>
        <taxon>Thermoanaerobacterales</taxon>
        <taxon>Thermoanaerobacteraceae</taxon>
        <taxon>Thermoanaerobacter</taxon>
    </lineage>
</organism>
<feature type="chain" id="PRO_0000057677" description="Beta-galactosidase">
    <location>
        <begin position="1"/>
        <end position="743"/>
    </location>
</feature>
<feature type="active site" description="Proton donor" evidence="1">
    <location>
        <position position="388"/>
    </location>
</feature>
<feature type="active site" description="Nucleophile" evidence="1">
    <location>
        <position position="453"/>
    </location>
</feature>
<feature type="sequence conflict" description="In Ref. 1; CAA69850." evidence="3" ref="1">
    <original>Y</original>
    <variation>H</variation>
    <location>
        <position position="54"/>
    </location>
</feature>
<feature type="sequence conflict" description="In Ref. 1; CAA69850." evidence="3" ref="1">
    <original>TVAK</original>
    <variation>LLR</variation>
    <location>
        <begin position="84"/>
        <end position="87"/>
    </location>
</feature>
<feature type="sequence conflict" description="In Ref. 1; CAA69850." evidence="3" ref="1">
    <original>R</original>
    <variation>KG</variation>
    <location>
        <position position="265"/>
    </location>
</feature>
<feature type="sequence conflict" description="In Ref. 1; CAA69850." evidence="3" ref="1">
    <original>L</original>
    <variation>M</variation>
    <location>
        <position position="341"/>
    </location>
</feature>
<feature type="sequence conflict" description="In Ref. 1; CAA69850." evidence="3" ref="1">
    <original>S</original>
    <variation>R</variation>
    <location>
        <position position="389"/>
    </location>
</feature>
<feature type="sequence conflict" description="In Ref. 1; CAA69850." evidence="3" ref="1">
    <original>N</original>
    <variation>S</variation>
    <location>
        <position position="609"/>
    </location>
</feature>
<feature type="sequence conflict" description="In Ref. 1; CAA69850." evidence="3" ref="1">
    <original>A</original>
    <variation>S</variation>
    <location>
        <position position="618"/>
    </location>
</feature>
<feature type="sequence conflict" description="In Ref. 1; CAA69850." evidence="3" ref="1">
    <original>I</original>
    <variation>V</variation>
    <location>
        <position position="623"/>
    </location>
</feature>
<feature type="sequence conflict" description="In Ref. 1; CAA69850." evidence="3" ref="1">
    <original>SC</original>
    <variation>TA</variation>
    <location>
        <begin position="648"/>
        <end position="649"/>
    </location>
</feature>
<feature type="sequence conflict" description="In Ref. 1; CAA69850." evidence="3" ref="1">
    <original>N</original>
    <variation>V</variation>
    <location>
        <position position="652"/>
    </location>
</feature>
<feature type="sequence conflict" description="In Ref. 1; CAA69850." evidence="3" ref="1">
    <original>A</original>
    <variation>S</variation>
    <location>
        <position position="659"/>
    </location>
</feature>
<reference key="1">
    <citation type="submission" date="1998-02" db="EMBL/GenBank/DDBJ databases">
        <authorList>
            <person name="Zverlov V."/>
        </authorList>
    </citation>
    <scope>NUCLEOTIDE SEQUENCE [GENOMIC DNA]</scope>
</reference>
<reference key="2">
    <citation type="submission" date="2008-01" db="EMBL/GenBank/DDBJ databases">
        <title>Complete sequence of Thermoanaerobacter pseudethanolicus 39E.</title>
        <authorList>
            <person name="Copeland A."/>
            <person name="Lucas S."/>
            <person name="Lapidus A."/>
            <person name="Barry K."/>
            <person name="Glavina del Rio T."/>
            <person name="Dalin E."/>
            <person name="Tice H."/>
            <person name="Pitluck S."/>
            <person name="Bruce D."/>
            <person name="Goodwin L."/>
            <person name="Saunders E."/>
            <person name="Brettin T."/>
            <person name="Detter J.C."/>
            <person name="Han C."/>
            <person name="Schmutz J."/>
            <person name="Larimer F."/>
            <person name="Land M."/>
            <person name="Hauser L."/>
            <person name="Kyrpides N."/>
            <person name="Lykidis A."/>
            <person name="Hemme C."/>
            <person name="Fields M.W."/>
            <person name="He Z."/>
            <person name="Zhou J."/>
            <person name="Richardson P."/>
        </authorList>
    </citation>
    <scope>NUCLEOTIDE SEQUENCE [LARGE SCALE GENOMIC DNA]</scope>
    <source>
        <strain>ATCC 33223 / DSM 2355 / 39E</strain>
    </source>
</reference>
<evidence type="ECO:0000250" key="1"/>
<evidence type="ECO:0000250" key="2">
    <source>
        <dbReference type="UniProtKB" id="P26257"/>
    </source>
</evidence>
<evidence type="ECO:0000305" key="3"/>
<protein>
    <recommendedName>
        <fullName>Beta-galactosidase</fullName>
        <shortName>Beta-gal</shortName>
        <ecNumber>3.2.1.23</ecNumber>
    </recommendedName>
</protein>
<name>BGAL_THEP3</name>
<keyword id="KW-0326">Glycosidase</keyword>
<keyword id="KW-0378">Hydrolase</keyword>
<keyword id="KW-1185">Reference proteome</keyword>
<accession>P77989</accession>
<accession>B0K7M6</accession>
<comment type="function">
    <text evidence="2">Beta-galactosidase.</text>
</comment>
<comment type="catalytic activity">
    <reaction evidence="2">
        <text>Hydrolysis of terminal non-reducing beta-D-galactose residues in beta-D-galactosides.</text>
        <dbReference type="EC" id="3.2.1.23"/>
    </reaction>
</comment>
<comment type="subunit">
    <text evidence="2">Homodimer.</text>
</comment>
<comment type="similarity">
    <text evidence="3">Belongs to the glycosyl hydrolase 2 family.</text>
</comment>
<dbReference type="EC" id="3.2.1.23"/>
<dbReference type="EMBL" id="Y08557">
    <property type="protein sequence ID" value="CAA69850.1"/>
    <property type="molecule type" value="Genomic_DNA"/>
</dbReference>
<dbReference type="EMBL" id="CP000924">
    <property type="protein sequence ID" value="ABY94275.1"/>
    <property type="molecule type" value="Genomic_DNA"/>
</dbReference>
<dbReference type="RefSeq" id="WP_012269093.1">
    <property type="nucleotide sequence ID" value="NC_010321.1"/>
</dbReference>
<dbReference type="SMR" id="P77989"/>
<dbReference type="STRING" id="340099.Teth39_0611"/>
<dbReference type="CAZy" id="GH2">
    <property type="family name" value="Glycoside Hydrolase Family 2"/>
</dbReference>
<dbReference type="KEGG" id="tpd:Teth39_0611"/>
<dbReference type="eggNOG" id="COG3250">
    <property type="taxonomic scope" value="Bacteria"/>
</dbReference>
<dbReference type="HOGENOM" id="CLU_006501_5_1_9"/>
<dbReference type="Proteomes" id="UP000002156">
    <property type="component" value="Chromosome"/>
</dbReference>
<dbReference type="GO" id="GO:0004565">
    <property type="term" value="F:beta-galactosidase activity"/>
    <property type="evidence" value="ECO:0007669"/>
    <property type="project" value="UniProtKB-EC"/>
</dbReference>
<dbReference type="GO" id="GO:0005975">
    <property type="term" value="P:carbohydrate metabolic process"/>
    <property type="evidence" value="ECO:0007669"/>
    <property type="project" value="InterPro"/>
</dbReference>
<dbReference type="Gene3D" id="2.60.120.260">
    <property type="entry name" value="Galactose-binding domain-like"/>
    <property type="match status" value="1"/>
</dbReference>
<dbReference type="Gene3D" id="3.20.20.80">
    <property type="entry name" value="Glycosidases"/>
    <property type="match status" value="1"/>
</dbReference>
<dbReference type="Gene3D" id="2.60.40.10">
    <property type="entry name" value="Immunoglobulins"/>
    <property type="match status" value="3"/>
</dbReference>
<dbReference type="InterPro" id="IPR036156">
    <property type="entry name" value="Beta-gal/glucu_dom_sf"/>
</dbReference>
<dbReference type="InterPro" id="IPR032311">
    <property type="entry name" value="DUF4982"/>
</dbReference>
<dbReference type="InterPro" id="IPR008979">
    <property type="entry name" value="Galactose-bd-like_sf"/>
</dbReference>
<dbReference type="InterPro" id="IPR051913">
    <property type="entry name" value="GH2_Domain-Containing"/>
</dbReference>
<dbReference type="InterPro" id="IPR040605">
    <property type="entry name" value="Glyco_hydro2_dom5"/>
</dbReference>
<dbReference type="InterPro" id="IPR006101">
    <property type="entry name" value="Glyco_hydro_2"/>
</dbReference>
<dbReference type="InterPro" id="IPR023232">
    <property type="entry name" value="Glyco_hydro_2_AS"/>
</dbReference>
<dbReference type="InterPro" id="IPR006103">
    <property type="entry name" value="Glyco_hydro_2_cat"/>
</dbReference>
<dbReference type="InterPro" id="IPR023230">
    <property type="entry name" value="Glyco_hydro_2_CS"/>
</dbReference>
<dbReference type="InterPro" id="IPR006102">
    <property type="entry name" value="Glyco_hydro_2_Ig-like"/>
</dbReference>
<dbReference type="InterPro" id="IPR006104">
    <property type="entry name" value="Glyco_hydro_2_N"/>
</dbReference>
<dbReference type="InterPro" id="IPR017853">
    <property type="entry name" value="Glycoside_hydrolase_SF"/>
</dbReference>
<dbReference type="InterPro" id="IPR013783">
    <property type="entry name" value="Ig-like_fold"/>
</dbReference>
<dbReference type="InterPro" id="IPR008964">
    <property type="entry name" value="Invasin/intimin_cell_adhesion"/>
</dbReference>
<dbReference type="PANTHER" id="PTHR42732">
    <property type="entry name" value="BETA-GALACTOSIDASE"/>
    <property type="match status" value="1"/>
</dbReference>
<dbReference type="PANTHER" id="PTHR42732:SF1">
    <property type="entry name" value="BETA-MANNOSIDASE"/>
    <property type="match status" value="1"/>
</dbReference>
<dbReference type="Pfam" id="PF16355">
    <property type="entry name" value="DUF4982"/>
    <property type="match status" value="1"/>
</dbReference>
<dbReference type="Pfam" id="PF18565">
    <property type="entry name" value="Glyco_hydro2_C5"/>
    <property type="match status" value="1"/>
</dbReference>
<dbReference type="Pfam" id="PF00703">
    <property type="entry name" value="Glyco_hydro_2"/>
    <property type="match status" value="1"/>
</dbReference>
<dbReference type="Pfam" id="PF02836">
    <property type="entry name" value="Glyco_hydro_2_C"/>
    <property type="match status" value="1"/>
</dbReference>
<dbReference type="Pfam" id="PF02837">
    <property type="entry name" value="Glyco_hydro_2_N"/>
    <property type="match status" value="1"/>
</dbReference>
<dbReference type="PRINTS" id="PR00132">
    <property type="entry name" value="GLHYDRLASE2"/>
</dbReference>
<dbReference type="SUPFAM" id="SSF51445">
    <property type="entry name" value="(Trans)glycosidases"/>
    <property type="match status" value="1"/>
</dbReference>
<dbReference type="SUPFAM" id="SSF49303">
    <property type="entry name" value="beta-Galactosidase/glucuronidase domain"/>
    <property type="match status" value="1"/>
</dbReference>
<dbReference type="SUPFAM" id="SSF49785">
    <property type="entry name" value="Galactose-binding domain-like"/>
    <property type="match status" value="1"/>
</dbReference>
<dbReference type="SUPFAM" id="SSF49373">
    <property type="entry name" value="Invasin/intimin cell-adhesion fragments"/>
    <property type="match status" value="1"/>
</dbReference>
<dbReference type="PROSITE" id="PS00719">
    <property type="entry name" value="GLYCOSYL_HYDROL_F2_1"/>
    <property type="match status" value="1"/>
</dbReference>
<dbReference type="PROSITE" id="PS00608">
    <property type="entry name" value="GLYCOSYL_HYDROL_F2_2"/>
    <property type="match status" value="1"/>
</dbReference>
<gene>
    <name type="primary">lacZ</name>
    <name type="synonym">lacA</name>
    <name type="ordered locus">Teth39_0611</name>
</gene>
<sequence length="743" mass="85765">MGRDVLNFNVDWLYIPEDLNDAYKFDFDESNFEVVSLPHANKTFPHHYFKEEDYRFVSWYRKHFKVDERYKGKKVYIHFEGVITVAKVYVNGEFVGEHKGGYTPFEFDITEYIKYGNFENLIAVQVDSREHKDIPPEGHLVDYMLFGGIYRNVWLKILNDTHIKDVYFVVDKLQDSVAEISITTTIAGKEISNGKILTEVINKEGVVCSSVVTDIKEMQKEIVQQIKMDNPLTWHPDHPYLYNVSVKLIAENEILDNYTFKTGIRTVEFRDDGKFYINGEPLKLRGLNRHQTFPYVGGAMPDRVQRKDADILKYELGLNYVRTSHYPQAVSFLDRCDEIGLLVFEEIPGWQHIGDENWKNIAKENLKEMILRDRNHPCIFMWGVRINESLDDHDFYKEMNEIAHKLDRSRPTGGVRYLRDSEKLEDVFTYNDFIYNLEGKIQLPNHKKYMVTEYMGHMYPTKSYDNLNRLITHARLHALIQDKQYGIPNMAGASGWCAFDYNTTSAFGSGDNICYHGVCDIFRLPKFAAHFYRSQADPHLYGPYVFIASYLIPSFEEENGDKLLVFSNCEEVELYINDKFVKRQMPNRVDFPSLPHPPFEFSMKECGINYMEVRVNNASITAIGLIDGKEVARHTLRPYGKPHKLILSCDDNEIMADGADCTRVVVSVVDENGSILPYANIPVSFEIEGEGKLIGENPLTLEAGRGAVYVKSTRKPGEIILKAKSHYVAEESNVSIKTKSIGY</sequence>
<proteinExistence type="inferred from homology"/>